<sequence>MTSTKDKIEKLRKILLKYEYFYHTLNQSIISDAEYDYLFRQLYELELKNKELIPSDSPTQKVGSHILQKFKKIKHFSPMLSLENTFDVNGYLNFKKRIKKSIHNNEPLSFCCELKLDGVAISIIYEEGIFVRAATRGDGFEGENITSNARMIDSIPLKLKGIDIPKRLEIRGEVFMLKSNFIKLNKKYKLNQNKYFSNPRNAAAGSLRHIDPNITAERKLIFSCHGCDFFVKTNKELTTHYQRLMKCLSWGIPVNKEIVICSSDIEIIQFYKKIAQKRNFLDFDIDGIVIKVNSLELQKKIGSTTKSPRWAIAFKFSPKERITTLNDVKFQVGRTGVITPVAYFNPVYISGVMISKASLHNKNEIERLNLHFNDTITICRSGDVIPRLLNVIEIRRCDNAKKIIFPSFCPVCNTELLENIEEKLIRCHSGLTCDAQKKQALYHFFSKKSLYVVGLGPKIINELVEKGLVKNPIDFFYLKDIDLIQLKNVGKRKSIKIINSIKKCKKTTLKCFIYALGIPGVGEVVAGKIANYFIKLDKLMNSNILELNCISGVGKIISNNIFNYFSTISNREMVVKLIKQAGIFLNDQEIHKINSEKTYFFNKKIVLTGVFKSFSRIELKTILLSLGAKISNNISRKTDFLIYGNNFGSKFFRAKDLDVKIINQEELNSLIRIKE</sequence>
<organism>
    <name type="scientific">Buchnera aphidicola subsp. Acyrthosiphon pisum (strain APS)</name>
    <name type="common">Acyrthosiphon pisum symbiotic bacterium</name>
    <dbReference type="NCBI Taxonomy" id="107806"/>
    <lineage>
        <taxon>Bacteria</taxon>
        <taxon>Pseudomonadati</taxon>
        <taxon>Pseudomonadota</taxon>
        <taxon>Gammaproteobacteria</taxon>
        <taxon>Enterobacterales</taxon>
        <taxon>Erwiniaceae</taxon>
        <taxon>Buchnera</taxon>
    </lineage>
</organism>
<protein>
    <recommendedName>
        <fullName evidence="1">DNA ligase</fullName>
        <ecNumber evidence="1">6.5.1.2</ecNumber>
    </recommendedName>
    <alternativeName>
        <fullName evidence="1">Polydeoxyribonucleotide synthase [NAD(+)]</fullName>
    </alternativeName>
</protein>
<comment type="function">
    <text evidence="1">DNA ligase that catalyzes the formation of phosphodiester linkages between 5'-phosphoryl and 3'-hydroxyl groups in double-stranded DNA using NAD as a coenzyme and as the energy source for the reaction. It is essential for DNA replication and repair of damaged DNA.</text>
</comment>
<comment type="catalytic activity">
    <reaction evidence="1">
        <text>NAD(+) + (deoxyribonucleotide)n-3'-hydroxyl + 5'-phospho-(deoxyribonucleotide)m = (deoxyribonucleotide)n+m + AMP + beta-nicotinamide D-nucleotide.</text>
        <dbReference type="EC" id="6.5.1.2"/>
    </reaction>
</comment>
<comment type="cofactor">
    <cofactor evidence="1">
        <name>Mg(2+)</name>
        <dbReference type="ChEBI" id="CHEBI:18420"/>
    </cofactor>
    <cofactor evidence="1">
        <name>Mn(2+)</name>
        <dbReference type="ChEBI" id="CHEBI:29035"/>
    </cofactor>
</comment>
<comment type="similarity">
    <text evidence="1">Belongs to the NAD-dependent DNA ligase family. LigA subfamily.</text>
</comment>
<proteinExistence type="inferred from homology"/>
<gene>
    <name evidence="1" type="primary">ligA</name>
    <name type="synonym">lig</name>
    <name type="ordered locus">BU067</name>
</gene>
<dbReference type="EC" id="6.5.1.2" evidence="1"/>
<dbReference type="EMBL" id="BA000003">
    <property type="protein sequence ID" value="BAB12790.1"/>
    <property type="molecule type" value="Genomic_DNA"/>
</dbReference>
<dbReference type="RefSeq" id="NP_239904.1">
    <property type="nucleotide sequence ID" value="NC_002528.1"/>
</dbReference>
<dbReference type="RefSeq" id="WP_010895924.1">
    <property type="nucleotide sequence ID" value="NC_002528.1"/>
</dbReference>
<dbReference type="SMR" id="P57172"/>
<dbReference type="STRING" id="563178.BUAP5A_066"/>
<dbReference type="EnsemblBacteria" id="BAB12790">
    <property type="protein sequence ID" value="BAB12790"/>
    <property type="gene ID" value="BAB12790"/>
</dbReference>
<dbReference type="KEGG" id="buc:BU067"/>
<dbReference type="PATRIC" id="fig|107806.10.peg.76"/>
<dbReference type="eggNOG" id="COG0272">
    <property type="taxonomic scope" value="Bacteria"/>
</dbReference>
<dbReference type="HOGENOM" id="CLU_007764_2_1_6"/>
<dbReference type="Proteomes" id="UP000001806">
    <property type="component" value="Chromosome"/>
</dbReference>
<dbReference type="GO" id="GO:0005829">
    <property type="term" value="C:cytosol"/>
    <property type="evidence" value="ECO:0007669"/>
    <property type="project" value="TreeGrafter"/>
</dbReference>
<dbReference type="GO" id="GO:0003677">
    <property type="term" value="F:DNA binding"/>
    <property type="evidence" value="ECO:0007669"/>
    <property type="project" value="InterPro"/>
</dbReference>
<dbReference type="GO" id="GO:0003911">
    <property type="term" value="F:DNA ligase (NAD+) activity"/>
    <property type="evidence" value="ECO:0007669"/>
    <property type="project" value="UniProtKB-UniRule"/>
</dbReference>
<dbReference type="GO" id="GO:0046872">
    <property type="term" value="F:metal ion binding"/>
    <property type="evidence" value="ECO:0007669"/>
    <property type="project" value="UniProtKB-KW"/>
</dbReference>
<dbReference type="GO" id="GO:0006281">
    <property type="term" value="P:DNA repair"/>
    <property type="evidence" value="ECO:0007669"/>
    <property type="project" value="UniProtKB-KW"/>
</dbReference>
<dbReference type="GO" id="GO:0006260">
    <property type="term" value="P:DNA replication"/>
    <property type="evidence" value="ECO:0007669"/>
    <property type="project" value="UniProtKB-KW"/>
</dbReference>
<dbReference type="CDD" id="cd17748">
    <property type="entry name" value="BRCT_DNA_ligase_like"/>
    <property type="match status" value="1"/>
</dbReference>
<dbReference type="CDD" id="cd00114">
    <property type="entry name" value="LIGANc"/>
    <property type="match status" value="1"/>
</dbReference>
<dbReference type="FunFam" id="3.30.470.30:FF:000001">
    <property type="entry name" value="DNA ligase"/>
    <property type="match status" value="1"/>
</dbReference>
<dbReference type="Gene3D" id="6.20.10.30">
    <property type="match status" value="1"/>
</dbReference>
<dbReference type="Gene3D" id="1.10.150.20">
    <property type="entry name" value="5' to 3' exonuclease, C-terminal subdomain"/>
    <property type="match status" value="2"/>
</dbReference>
<dbReference type="Gene3D" id="3.40.50.10190">
    <property type="entry name" value="BRCT domain"/>
    <property type="match status" value="1"/>
</dbReference>
<dbReference type="Gene3D" id="3.30.470.30">
    <property type="entry name" value="DNA ligase/mRNA capping enzyme"/>
    <property type="match status" value="1"/>
</dbReference>
<dbReference type="Gene3D" id="1.10.287.610">
    <property type="entry name" value="Helix hairpin bin"/>
    <property type="match status" value="1"/>
</dbReference>
<dbReference type="Gene3D" id="2.40.50.140">
    <property type="entry name" value="Nucleic acid-binding proteins"/>
    <property type="match status" value="1"/>
</dbReference>
<dbReference type="HAMAP" id="MF_01588">
    <property type="entry name" value="DNA_ligase_A"/>
    <property type="match status" value="1"/>
</dbReference>
<dbReference type="InterPro" id="IPR001357">
    <property type="entry name" value="BRCT_dom"/>
</dbReference>
<dbReference type="InterPro" id="IPR036420">
    <property type="entry name" value="BRCT_dom_sf"/>
</dbReference>
<dbReference type="InterPro" id="IPR041663">
    <property type="entry name" value="DisA/LigA_HHH"/>
</dbReference>
<dbReference type="InterPro" id="IPR001679">
    <property type="entry name" value="DNA_ligase"/>
</dbReference>
<dbReference type="InterPro" id="IPR018239">
    <property type="entry name" value="DNA_ligase_AS"/>
</dbReference>
<dbReference type="InterPro" id="IPR033136">
    <property type="entry name" value="DNA_ligase_CS"/>
</dbReference>
<dbReference type="InterPro" id="IPR013839">
    <property type="entry name" value="DNAligase_adenylation"/>
</dbReference>
<dbReference type="InterPro" id="IPR013840">
    <property type="entry name" value="DNAligase_N"/>
</dbReference>
<dbReference type="InterPro" id="IPR003583">
    <property type="entry name" value="Hlx-hairpin-Hlx_DNA-bd_motif"/>
</dbReference>
<dbReference type="InterPro" id="IPR012340">
    <property type="entry name" value="NA-bd_OB-fold"/>
</dbReference>
<dbReference type="InterPro" id="IPR004150">
    <property type="entry name" value="NAD_DNA_ligase_OB"/>
</dbReference>
<dbReference type="InterPro" id="IPR010994">
    <property type="entry name" value="RuvA_2-like"/>
</dbReference>
<dbReference type="NCBIfam" id="TIGR00575">
    <property type="entry name" value="dnlj"/>
    <property type="match status" value="1"/>
</dbReference>
<dbReference type="NCBIfam" id="NF005932">
    <property type="entry name" value="PRK07956.1"/>
    <property type="match status" value="1"/>
</dbReference>
<dbReference type="PANTHER" id="PTHR23389">
    <property type="entry name" value="CHROMOSOME TRANSMISSION FIDELITY FACTOR 18"/>
    <property type="match status" value="1"/>
</dbReference>
<dbReference type="PANTHER" id="PTHR23389:SF9">
    <property type="entry name" value="DNA LIGASE"/>
    <property type="match status" value="1"/>
</dbReference>
<dbReference type="Pfam" id="PF00533">
    <property type="entry name" value="BRCT"/>
    <property type="match status" value="1"/>
</dbReference>
<dbReference type="Pfam" id="PF01653">
    <property type="entry name" value="DNA_ligase_aden"/>
    <property type="match status" value="1"/>
</dbReference>
<dbReference type="Pfam" id="PF03120">
    <property type="entry name" value="DNA_ligase_OB"/>
    <property type="match status" value="1"/>
</dbReference>
<dbReference type="Pfam" id="PF12826">
    <property type="entry name" value="HHH_2"/>
    <property type="match status" value="1"/>
</dbReference>
<dbReference type="Pfam" id="PF22745">
    <property type="entry name" value="Nlig-Ia"/>
    <property type="match status" value="1"/>
</dbReference>
<dbReference type="PIRSF" id="PIRSF001604">
    <property type="entry name" value="LigA"/>
    <property type="match status" value="1"/>
</dbReference>
<dbReference type="SMART" id="SM00292">
    <property type="entry name" value="BRCT"/>
    <property type="match status" value="1"/>
</dbReference>
<dbReference type="SMART" id="SM00278">
    <property type="entry name" value="HhH1"/>
    <property type="match status" value="3"/>
</dbReference>
<dbReference type="SMART" id="SM00532">
    <property type="entry name" value="LIGANc"/>
    <property type="match status" value="1"/>
</dbReference>
<dbReference type="SUPFAM" id="SSF52113">
    <property type="entry name" value="BRCT domain"/>
    <property type="match status" value="1"/>
</dbReference>
<dbReference type="SUPFAM" id="SSF56091">
    <property type="entry name" value="DNA ligase/mRNA capping enzyme, catalytic domain"/>
    <property type="match status" value="1"/>
</dbReference>
<dbReference type="SUPFAM" id="SSF50249">
    <property type="entry name" value="Nucleic acid-binding proteins"/>
    <property type="match status" value="1"/>
</dbReference>
<dbReference type="SUPFAM" id="SSF47781">
    <property type="entry name" value="RuvA domain 2-like"/>
    <property type="match status" value="1"/>
</dbReference>
<dbReference type="PROSITE" id="PS50172">
    <property type="entry name" value="BRCT"/>
    <property type="match status" value="1"/>
</dbReference>
<dbReference type="PROSITE" id="PS01055">
    <property type="entry name" value="DNA_LIGASE_N1"/>
    <property type="match status" value="1"/>
</dbReference>
<dbReference type="PROSITE" id="PS01056">
    <property type="entry name" value="DNA_LIGASE_N2"/>
    <property type="match status" value="1"/>
</dbReference>
<accession>P57172</accession>
<reference key="1">
    <citation type="journal article" date="2000" name="Nature">
        <title>Genome sequence of the endocellular bacterial symbiont of aphids Buchnera sp. APS.</title>
        <authorList>
            <person name="Shigenobu S."/>
            <person name="Watanabe H."/>
            <person name="Hattori M."/>
            <person name="Sakaki Y."/>
            <person name="Ishikawa H."/>
        </authorList>
    </citation>
    <scope>NUCLEOTIDE SEQUENCE [LARGE SCALE GENOMIC DNA]</scope>
    <source>
        <strain>APS</strain>
    </source>
</reference>
<feature type="chain" id="PRO_0000161740" description="DNA ligase">
    <location>
        <begin position="1"/>
        <end position="675"/>
    </location>
</feature>
<feature type="domain" description="BRCT" evidence="1">
    <location>
        <begin position="595"/>
        <end position="675"/>
    </location>
</feature>
<feature type="active site" description="N6-AMP-lysine intermediate" evidence="1">
    <location>
        <position position="115"/>
    </location>
</feature>
<feature type="binding site" evidence="1">
    <location>
        <begin position="32"/>
        <end position="36"/>
    </location>
    <ligand>
        <name>NAD(+)</name>
        <dbReference type="ChEBI" id="CHEBI:57540"/>
    </ligand>
</feature>
<feature type="binding site" evidence="1">
    <location>
        <begin position="81"/>
        <end position="82"/>
    </location>
    <ligand>
        <name>NAD(+)</name>
        <dbReference type="ChEBI" id="CHEBI:57540"/>
    </ligand>
</feature>
<feature type="binding site" evidence="1">
    <location>
        <position position="113"/>
    </location>
    <ligand>
        <name>NAD(+)</name>
        <dbReference type="ChEBI" id="CHEBI:57540"/>
    </ligand>
</feature>
<feature type="binding site" evidence="1">
    <location>
        <position position="136"/>
    </location>
    <ligand>
        <name>NAD(+)</name>
        <dbReference type="ChEBI" id="CHEBI:57540"/>
    </ligand>
</feature>
<feature type="binding site" evidence="1">
    <location>
        <position position="173"/>
    </location>
    <ligand>
        <name>NAD(+)</name>
        <dbReference type="ChEBI" id="CHEBI:57540"/>
    </ligand>
</feature>
<feature type="binding site" evidence="1">
    <location>
        <position position="291"/>
    </location>
    <ligand>
        <name>NAD(+)</name>
        <dbReference type="ChEBI" id="CHEBI:57540"/>
    </ligand>
</feature>
<feature type="binding site" evidence="1">
    <location>
        <position position="315"/>
    </location>
    <ligand>
        <name>NAD(+)</name>
        <dbReference type="ChEBI" id="CHEBI:57540"/>
    </ligand>
</feature>
<feature type="binding site" evidence="1">
    <location>
        <position position="409"/>
    </location>
    <ligand>
        <name>Zn(2+)</name>
        <dbReference type="ChEBI" id="CHEBI:29105"/>
    </ligand>
</feature>
<feature type="binding site" evidence="1">
    <location>
        <position position="412"/>
    </location>
    <ligand>
        <name>Zn(2+)</name>
        <dbReference type="ChEBI" id="CHEBI:29105"/>
    </ligand>
</feature>
<feature type="binding site" evidence="1">
    <location>
        <position position="427"/>
    </location>
    <ligand>
        <name>Zn(2+)</name>
        <dbReference type="ChEBI" id="CHEBI:29105"/>
    </ligand>
</feature>
<feature type="binding site" evidence="1">
    <location>
        <position position="433"/>
    </location>
    <ligand>
        <name>Zn(2+)</name>
        <dbReference type="ChEBI" id="CHEBI:29105"/>
    </ligand>
</feature>
<evidence type="ECO:0000255" key="1">
    <source>
        <dbReference type="HAMAP-Rule" id="MF_01588"/>
    </source>
</evidence>
<name>DNLJ_BUCAI</name>
<keyword id="KW-0227">DNA damage</keyword>
<keyword id="KW-0234">DNA repair</keyword>
<keyword id="KW-0235">DNA replication</keyword>
<keyword id="KW-0436">Ligase</keyword>
<keyword id="KW-0460">Magnesium</keyword>
<keyword id="KW-0464">Manganese</keyword>
<keyword id="KW-0479">Metal-binding</keyword>
<keyword id="KW-0520">NAD</keyword>
<keyword id="KW-1185">Reference proteome</keyword>
<keyword id="KW-0862">Zinc</keyword>